<dbReference type="EMBL" id="M60396">
    <property type="protein sequence ID" value="AAA61054.1"/>
    <property type="molecule type" value="mRNA"/>
</dbReference>
<dbReference type="EMBL" id="L02647">
    <property type="protein sequence ID" value="AAA61056.1"/>
    <property type="molecule type" value="mRNA"/>
</dbReference>
<dbReference type="EMBL" id="L02648">
    <property type="protein sequence ID" value="AAA61057.1"/>
    <property type="molecule type" value="mRNA"/>
</dbReference>
<dbReference type="EMBL" id="AF047576">
    <property type="protein sequence ID" value="AAC05491.1"/>
    <property type="molecule type" value="Genomic_DNA"/>
</dbReference>
<dbReference type="EMBL" id="CR456591">
    <property type="protein sequence ID" value="CAG30477.1"/>
    <property type="molecule type" value="mRNA"/>
</dbReference>
<dbReference type="EMBL" id="AC005006">
    <property type="status" value="NOT_ANNOTATED_CDS"/>
    <property type="molecule type" value="Genomic_DNA"/>
</dbReference>
<dbReference type="EMBL" id="BC001176">
    <property type="protein sequence ID" value="AAH01176.1"/>
    <property type="molecule type" value="mRNA"/>
</dbReference>
<dbReference type="EMBL" id="BC011239">
    <property type="protein sequence ID" value="AAH11239.1"/>
    <property type="molecule type" value="mRNA"/>
</dbReference>
<dbReference type="CCDS" id="CCDS13881.1">
    <molecule id="P20062-1"/>
</dbReference>
<dbReference type="CCDS" id="CCDS54519.1">
    <molecule id="P20062-2"/>
</dbReference>
<dbReference type="PIR" id="A39744">
    <property type="entry name" value="A39744"/>
</dbReference>
<dbReference type="RefSeq" id="NP_000346.2">
    <molecule id="P20062-1"/>
    <property type="nucleotide sequence ID" value="NM_000355.3"/>
</dbReference>
<dbReference type="RefSeq" id="NP_001171655.1">
    <molecule id="P20062-2"/>
    <property type="nucleotide sequence ID" value="NM_001184726.2"/>
</dbReference>
<dbReference type="PDB" id="2BB5">
    <property type="method" value="X-ray"/>
    <property type="resolution" value="3.20 A"/>
    <property type="chains" value="A/B=19-427"/>
</dbReference>
<dbReference type="PDB" id="4ZRP">
    <property type="method" value="X-ray"/>
    <property type="resolution" value="2.10 A"/>
    <property type="chains" value="A/B=19-427"/>
</dbReference>
<dbReference type="PDB" id="4ZRQ">
    <property type="method" value="X-ray"/>
    <property type="resolution" value="2.60 A"/>
    <property type="chains" value="A/B=19-427"/>
</dbReference>
<dbReference type="PDB" id="5NO0">
    <property type="method" value="X-ray"/>
    <property type="resolution" value="1.57 A"/>
    <property type="chains" value="A=325-427"/>
</dbReference>
<dbReference type="PDB" id="5NP4">
    <property type="method" value="X-ray"/>
    <property type="resolution" value="1.43 A"/>
    <property type="chains" value="A=325-427"/>
</dbReference>
<dbReference type="PDB" id="5NRP">
    <property type="method" value="X-ray"/>
    <property type="resolution" value="1.57 A"/>
    <property type="chains" value="A=325-427"/>
</dbReference>
<dbReference type="PDB" id="5NSA">
    <property type="method" value="X-ray"/>
    <property type="resolution" value="1.27 A"/>
    <property type="chains" value="A=325-427"/>
</dbReference>
<dbReference type="PDB" id="7QBD">
    <property type="method" value="X-ray"/>
    <property type="resolution" value="4.18 A"/>
    <property type="chains" value="A/B=19-427"/>
</dbReference>
<dbReference type="PDB" id="7QBE">
    <property type="method" value="X-ray"/>
    <property type="resolution" value="3.00 A"/>
    <property type="chains" value="A/C=19-427"/>
</dbReference>
<dbReference type="PDB" id="7QBF">
    <property type="method" value="X-ray"/>
    <property type="resolution" value="1.85 A"/>
    <property type="chains" value="A=19-427"/>
</dbReference>
<dbReference type="PDB" id="7QBG">
    <property type="method" value="X-ray"/>
    <property type="resolution" value="2.69 A"/>
    <property type="chains" value="A/C=19-427"/>
</dbReference>
<dbReference type="PDBsum" id="2BB5"/>
<dbReference type="PDBsum" id="4ZRP"/>
<dbReference type="PDBsum" id="4ZRQ"/>
<dbReference type="PDBsum" id="5NO0"/>
<dbReference type="PDBsum" id="5NP4"/>
<dbReference type="PDBsum" id="5NRP"/>
<dbReference type="PDBsum" id="5NSA"/>
<dbReference type="PDBsum" id="7QBD"/>
<dbReference type="PDBsum" id="7QBE"/>
<dbReference type="PDBsum" id="7QBF"/>
<dbReference type="PDBsum" id="7QBG"/>
<dbReference type="SMR" id="P20062"/>
<dbReference type="BioGRID" id="112808">
    <property type="interactions" value="15"/>
</dbReference>
<dbReference type="FunCoup" id="P20062">
    <property type="interactions" value="119"/>
</dbReference>
<dbReference type="IntAct" id="P20062">
    <property type="interactions" value="9"/>
</dbReference>
<dbReference type="STRING" id="9606.ENSP00000215838"/>
<dbReference type="DrugBank" id="DB00115">
    <property type="generic name" value="Cyanocobalamin"/>
</dbReference>
<dbReference type="DrugBank" id="DB00200">
    <property type="generic name" value="Hydroxocobalamin"/>
</dbReference>
<dbReference type="DrugCentral" id="P20062"/>
<dbReference type="BioMuta" id="TCN2"/>
<dbReference type="DMDM" id="224471876"/>
<dbReference type="jPOST" id="P20062"/>
<dbReference type="MassIVE" id="P20062"/>
<dbReference type="PaxDb" id="9606-ENSP00000215838"/>
<dbReference type="PeptideAtlas" id="P20062"/>
<dbReference type="ProteomicsDB" id="53720">
    <molecule id="P20062-1"/>
</dbReference>
<dbReference type="ProteomicsDB" id="53721">
    <molecule id="P20062-2"/>
</dbReference>
<dbReference type="ABCD" id="P20062">
    <property type="antibodies" value="4 sequenced antibodies"/>
</dbReference>
<dbReference type="Antibodypedia" id="206">
    <property type="antibodies" value="231 antibodies from 27 providers"/>
</dbReference>
<dbReference type="DNASU" id="6948"/>
<dbReference type="Ensembl" id="ENST00000215838.8">
    <molecule id="P20062-1"/>
    <property type="protein sequence ID" value="ENSP00000215838.3"/>
    <property type="gene ID" value="ENSG00000185339.10"/>
</dbReference>
<dbReference type="Ensembl" id="ENST00000407817.3">
    <molecule id="P20062-2"/>
    <property type="protein sequence ID" value="ENSP00000384914.3"/>
    <property type="gene ID" value="ENSG00000185339.10"/>
</dbReference>
<dbReference type="GeneID" id="6948"/>
<dbReference type="KEGG" id="hsa:6948"/>
<dbReference type="MANE-Select" id="ENST00000215838.8">
    <property type="protein sequence ID" value="ENSP00000215838.3"/>
    <property type="RefSeq nucleotide sequence ID" value="NM_000355.4"/>
    <property type="RefSeq protein sequence ID" value="NP_000346.2"/>
</dbReference>
<dbReference type="UCSC" id="uc003aip.3">
    <molecule id="P20062-1"/>
    <property type="organism name" value="human"/>
</dbReference>
<dbReference type="AGR" id="HGNC:11653"/>
<dbReference type="CTD" id="6948"/>
<dbReference type="DisGeNET" id="6948"/>
<dbReference type="GeneCards" id="TCN2"/>
<dbReference type="HGNC" id="HGNC:11653">
    <property type="gene designation" value="TCN2"/>
</dbReference>
<dbReference type="HPA" id="ENSG00000185339">
    <property type="expression patterns" value="Tissue enhanced (kidney)"/>
</dbReference>
<dbReference type="MalaCards" id="TCN2"/>
<dbReference type="MIM" id="275350">
    <property type="type" value="phenotype"/>
</dbReference>
<dbReference type="MIM" id="613441">
    <property type="type" value="gene"/>
</dbReference>
<dbReference type="neXtProt" id="NX_P20062"/>
<dbReference type="OpenTargets" id="ENSG00000185339"/>
<dbReference type="Orphanet" id="859">
    <property type="disease" value="Transcobalamin deficiency"/>
</dbReference>
<dbReference type="PharmGKB" id="PA36404"/>
<dbReference type="VEuPathDB" id="HostDB:ENSG00000185339"/>
<dbReference type="eggNOG" id="ENOG502QSED">
    <property type="taxonomic scope" value="Eukaryota"/>
</dbReference>
<dbReference type="GeneTree" id="ENSGT00530000063370"/>
<dbReference type="InParanoid" id="P20062"/>
<dbReference type="OMA" id="QCVKDSG"/>
<dbReference type="OrthoDB" id="9440006at2759"/>
<dbReference type="PAN-GO" id="P20062">
    <property type="GO annotations" value="3 GO annotations based on evolutionary models"/>
</dbReference>
<dbReference type="PhylomeDB" id="P20062"/>
<dbReference type="TreeFam" id="TF333092"/>
<dbReference type="PathwayCommons" id="P20062"/>
<dbReference type="Reactome" id="R-HSA-3359454">
    <property type="pathway name" value="Defective TCN2 causes TCN2 deficiency"/>
</dbReference>
<dbReference type="Reactome" id="R-HSA-3359485">
    <property type="pathway name" value="Defective CD320 causes MMATC"/>
</dbReference>
<dbReference type="Reactome" id="R-HSA-9758890">
    <property type="pathway name" value="Transport of RCbl within the body"/>
</dbReference>
<dbReference type="SABIO-RK" id="P20062"/>
<dbReference type="SignaLink" id="P20062"/>
<dbReference type="BioGRID-ORCS" id="6948">
    <property type="hits" value="11 hits in 1166 CRISPR screens"/>
</dbReference>
<dbReference type="ChiTaRS" id="TCN2">
    <property type="organism name" value="human"/>
</dbReference>
<dbReference type="EvolutionaryTrace" id="P20062"/>
<dbReference type="GenomeRNAi" id="6948"/>
<dbReference type="Pharos" id="P20062">
    <property type="development level" value="Tbio"/>
</dbReference>
<dbReference type="PRO" id="PR:P20062"/>
<dbReference type="Proteomes" id="UP000005640">
    <property type="component" value="Chromosome 22"/>
</dbReference>
<dbReference type="RNAct" id="P20062">
    <property type="molecule type" value="protein"/>
</dbReference>
<dbReference type="Bgee" id="ENSG00000185339">
    <property type="expression patterns" value="Expressed in gall bladder and 122 other cell types or tissues"/>
</dbReference>
<dbReference type="ExpressionAtlas" id="P20062">
    <property type="expression patterns" value="baseline and differential"/>
</dbReference>
<dbReference type="GO" id="GO:0009897">
    <property type="term" value="C:external side of plasma membrane"/>
    <property type="evidence" value="ECO:0007669"/>
    <property type="project" value="Ensembl"/>
</dbReference>
<dbReference type="GO" id="GO:0005576">
    <property type="term" value="C:extracellular region"/>
    <property type="evidence" value="ECO:0000304"/>
    <property type="project" value="Reactome"/>
</dbReference>
<dbReference type="GO" id="GO:0005615">
    <property type="term" value="C:extracellular space"/>
    <property type="evidence" value="ECO:0000314"/>
    <property type="project" value="UniProtKB"/>
</dbReference>
<dbReference type="GO" id="GO:0043202">
    <property type="term" value="C:lysosomal lumen"/>
    <property type="evidence" value="ECO:0000304"/>
    <property type="project" value="Reactome"/>
</dbReference>
<dbReference type="GO" id="GO:0005886">
    <property type="term" value="C:plasma membrane"/>
    <property type="evidence" value="ECO:0000304"/>
    <property type="project" value="Reactome"/>
</dbReference>
<dbReference type="GO" id="GO:0140355">
    <property type="term" value="F:cargo receptor ligand activity"/>
    <property type="evidence" value="ECO:0000269"/>
    <property type="project" value="Reactome"/>
</dbReference>
<dbReference type="GO" id="GO:0031419">
    <property type="term" value="F:cobalamin binding"/>
    <property type="evidence" value="ECO:0000314"/>
    <property type="project" value="UniProtKB"/>
</dbReference>
<dbReference type="GO" id="GO:0046872">
    <property type="term" value="F:metal ion binding"/>
    <property type="evidence" value="ECO:0007669"/>
    <property type="project" value="UniProtKB-KW"/>
</dbReference>
<dbReference type="GO" id="GO:0140104">
    <property type="term" value="F:molecular carrier activity"/>
    <property type="evidence" value="ECO:0007669"/>
    <property type="project" value="Ensembl"/>
</dbReference>
<dbReference type="GO" id="GO:0015889">
    <property type="term" value="P:cobalamin transport"/>
    <property type="evidence" value="ECO:0000314"/>
    <property type="project" value="UniProtKB"/>
</dbReference>
<dbReference type="GO" id="GO:0006824">
    <property type="term" value="P:cobalt ion transport"/>
    <property type="evidence" value="ECO:0007669"/>
    <property type="project" value="UniProtKB-KW"/>
</dbReference>
<dbReference type="FunFam" id="1.50.10.20:FF:000013">
    <property type="entry name" value="Transcobalamin-2"/>
    <property type="match status" value="1"/>
</dbReference>
<dbReference type="FunFam" id="2.170.130.30:FF:000002">
    <property type="entry name" value="Transcobalamin-2"/>
    <property type="match status" value="1"/>
</dbReference>
<dbReference type="Gene3D" id="1.50.10.20">
    <property type="match status" value="1"/>
</dbReference>
<dbReference type="Gene3D" id="2.170.130.30">
    <property type="match status" value="1"/>
</dbReference>
<dbReference type="InterPro" id="IPR002157">
    <property type="entry name" value="Cbl-bd_prot"/>
</dbReference>
<dbReference type="InterPro" id="IPR051588">
    <property type="entry name" value="Cobalamin_Transport"/>
</dbReference>
<dbReference type="InterPro" id="IPR008930">
    <property type="entry name" value="Terpenoid_cyclase/PrenylTrfase"/>
</dbReference>
<dbReference type="InterPro" id="IPR027954">
    <property type="entry name" value="Transcobalamin-like_C"/>
</dbReference>
<dbReference type="PANTHER" id="PTHR10559">
    <property type="entry name" value="TRANSCOBALAMIN-1/GASTRIC INTRINSIC FACTOR"/>
    <property type="match status" value="1"/>
</dbReference>
<dbReference type="PANTHER" id="PTHR10559:SF14">
    <property type="entry name" value="TRANSCOBALAMIN-2"/>
    <property type="match status" value="1"/>
</dbReference>
<dbReference type="Pfam" id="PF01122">
    <property type="entry name" value="Cobalamin_bind"/>
    <property type="match status" value="1"/>
</dbReference>
<dbReference type="Pfam" id="PF14478">
    <property type="entry name" value="DUF4430"/>
    <property type="match status" value="1"/>
</dbReference>
<dbReference type="SUPFAM" id="SSF48239">
    <property type="entry name" value="Terpenoid cyclases/Protein prenyltransferases"/>
    <property type="match status" value="1"/>
</dbReference>
<dbReference type="PROSITE" id="PS00468">
    <property type="entry name" value="COBALAMIN_BINDING"/>
    <property type="match status" value="1"/>
</dbReference>
<protein>
    <recommendedName>
        <fullName>Transcobalamin-2</fullName>
        <shortName>TC-2</shortName>
    </recommendedName>
    <alternativeName>
        <fullName>Transcobalamin II</fullName>
        <shortName>TC II</shortName>
        <shortName>TCII</shortName>
    </alternativeName>
</protein>
<evidence type="ECO:0000269" key="1">
    <source>
    </source>
</evidence>
<evidence type="ECO:0000269" key="2">
    <source>
    </source>
</evidence>
<evidence type="ECO:0000269" key="3">
    <source>
    </source>
</evidence>
<evidence type="ECO:0000269" key="4">
    <source>
    </source>
</evidence>
<evidence type="ECO:0000269" key="5">
    <source>
    </source>
</evidence>
<evidence type="ECO:0000269" key="6">
    <source>
    </source>
</evidence>
<evidence type="ECO:0000269" key="7">
    <source>
    </source>
</evidence>
<evidence type="ECO:0000269" key="8">
    <source>
    </source>
</evidence>
<evidence type="ECO:0000269" key="9">
    <source>
    </source>
</evidence>
<evidence type="ECO:0000269" key="10">
    <source>
    </source>
</evidence>
<evidence type="ECO:0000269" key="11">
    <source>
    </source>
</evidence>
<evidence type="ECO:0000269" key="12">
    <source>
    </source>
</evidence>
<evidence type="ECO:0000303" key="13">
    <source>
    </source>
</evidence>
<evidence type="ECO:0000305" key="14"/>
<evidence type="ECO:0007744" key="15">
    <source>
        <dbReference type="PDB" id="2BB5"/>
    </source>
</evidence>
<evidence type="ECO:0007744" key="16">
    <source>
        <dbReference type="PDB" id="4ZRP"/>
    </source>
</evidence>
<evidence type="ECO:0007744" key="17">
    <source>
        <dbReference type="PDB" id="4ZRQ"/>
    </source>
</evidence>
<evidence type="ECO:0007829" key="18">
    <source>
        <dbReference type="PDB" id="4ZRP"/>
    </source>
</evidence>
<evidence type="ECO:0007829" key="19">
    <source>
        <dbReference type="PDB" id="4ZRQ"/>
    </source>
</evidence>
<evidence type="ECO:0007829" key="20">
    <source>
        <dbReference type="PDB" id="5NSA"/>
    </source>
</evidence>
<evidence type="ECO:0007829" key="21">
    <source>
        <dbReference type="PDB" id="7QBF"/>
    </source>
</evidence>
<name>TCO2_HUMAN</name>
<reference key="1">
    <citation type="journal article" date="1991" name="J. Biol. Chem.">
        <title>The cDNA sequence and the deduced amino acid sequence of human transcobalamin II show homology with rat intrinsic factor and human transcobalamin I.</title>
        <authorList>
            <person name="Platica O."/>
            <person name="Janeczko R."/>
            <person name="Quadros E.V."/>
            <person name="Regec A."/>
            <person name="Romain R."/>
            <person name="Rothenberg S.P."/>
        </authorList>
    </citation>
    <scope>NUCLEOTIDE SEQUENCE [MRNA] (ISOFORM 1)</scope>
    <scope>VARIANTS THR-198; LEU-219; PRO-259 AND SER-376</scope>
</reference>
<reference key="2">
    <citation type="journal article" date="1993" name="Biochim. Biophys. Acta">
        <title>Isolation and sequence analysis of variant forms of human transcobalamin II.</title>
        <authorList>
            <person name="Li N."/>
            <person name="Seetharam S."/>
            <person name="Lindemans J."/>
            <person name="Alpers D.H."/>
            <person name="Arwert F."/>
            <person name="Seetharam B."/>
        </authorList>
    </citation>
    <scope>NUCLEOTIDE SEQUENCE [MRNA] (ISOFORM 1)</scope>
</reference>
<reference key="3">
    <citation type="journal article" date="1995" name="Blood">
        <title>The cloning and characterization of the human transcobalamin II gene.</title>
        <authorList>
            <person name="Regec A."/>
            <person name="Quadros E.V."/>
            <person name="Platica O."/>
            <person name="Rothenberg S.P."/>
        </authorList>
    </citation>
    <scope>NUCLEOTIDE SEQUENCE [GENOMIC DNA]</scope>
</reference>
<reference key="4">
    <citation type="journal article" date="2004" name="Genome Biol.">
        <title>A genome annotation-driven approach to cloning the human ORFeome.</title>
        <authorList>
            <person name="Collins J.E."/>
            <person name="Wright C.L."/>
            <person name="Edwards C.A."/>
            <person name="Davis M.P."/>
            <person name="Grinham J.A."/>
            <person name="Cole C.G."/>
            <person name="Goward M.E."/>
            <person name="Aguado B."/>
            <person name="Mallya M."/>
            <person name="Mokrab Y."/>
            <person name="Huckle E.J."/>
            <person name="Beare D.M."/>
            <person name="Dunham I."/>
        </authorList>
    </citation>
    <scope>NUCLEOTIDE SEQUENCE [LARGE SCALE MRNA] (ISOFORM 1)</scope>
    <scope>VARIANT PRO-259</scope>
</reference>
<reference key="5">
    <citation type="journal article" date="1999" name="Nature">
        <title>The DNA sequence of human chromosome 22.</title>
        <authorList>
            <person name="Dunham I."/>
            <person name="Hunt A.R."/>
            <person name="Collins J.E."/>
            <person name="Bruskiewich R."/>
            <person name="Beare D.M."/>
            <person name="Clamp M."/>
            <person name="Smink L.J."/>
            <person name="Ainscough R."/>
            <person name="Almeida J.P."/>
            <person name="Babbage A.K."/>
            <person name="Bagguley C."/>
            <person name="Bailey J."/>
            <person name="Barlow K.F."/>
            <person name="Bates K.N."/>
            <person name="Beasley O.P."/>
            <person name="Bird C.P."/>
            <person name="Blakey S.E."/>
            <person name="Bridgeman A.M."/>
            <person name="Buck D."/>
            <person name="Burgess J."/>
            <person name="Burrill W.D."/>
            <person name="Burton J."/>
            <person name="Carder C."/>
            <person name="Carter N.P."/>
            <person name="Chen Y."/>
            <person name="Clark G."/>
            <person name="Clegg S.M."/>
            <person name="Cobley V.E."/>
            <person name="Cole C.G."/>
            <person name="Collier R.E."/>
            <person name="Connor R."/>
            <person name="Conroy D."/>
            <person name="Corby N.R."/>
            <person name="Coville G.J."/>
            <person name="Cox A.V."/>
            <person name="Davis J."/>
            <person name="Dawson E."/>
            <person name="Dhami P.D."/>
            <person name="Dockree C."/>
            <person name="Dodsworth S.J."/>
            <person name="Durbin R.M."/>
            <person name="Ellington A.G."/>
            <person name="Evans K.L."/>
            <person name="Fey J.M."/>
            <person name="Fleming K."/>
            <person name="French L."/>
            <person name="Garner A.A."/>
            <person name="Gilbert J.G.R."/>
            <person name="Goward M.E."/>
            <person name="Grafham D.V."/>
            <person name="Griffiths M.N.D."/>
            <person name="Hall C."/>
            <person name="Hall R.E."/>
            <person name="Hall-Tamlyn G."/>
            <person name="Heathcott R.W."/>
            <person name="Ho S."/>
            <person name="Holmes S."/>
            <person name="Hunt S.E."/>
            <person name="Jones M.C."/>
            <person name="Kershaw J."/>
            <person name="Kimberley A.M."/>
            <person name="King A."/>
            <person name="Laird G.K."/>
            <person name="Langford C.F."/>
            <person name="Leversha M.A."/>
            <person name="Lloyd C."/>
            <person name="Lloyd D.M."/>
            <person name="Martyn I.D."/>
            <person name="Mashreghi-Mohammadi M."/>
            <person name="Matthews L.H."/>
            <person name="Mccann O.T."/>
            <person name="Mcclay J."/>
            <person name="Mclaren S."/>
            <person name="McMurray A.A."/>
            <person name="Milne S.A."/>
            <person name="Mortimore B.J."/>
            <person name="Odell C.N."/>
            <person name="Pavitt R."/>
            <person name="Pearce A.V."/>
            <person name="Pearson D."/>
            <person name="Phillimore B.J.C.T."/>
            <person name="Phillips S.H."/>
            <person name="Plumb R.W."/>
            <person name="Ramsay H."/>
            <person name="Ramsey Y."/>
            <person name="Rogers L."/>
            <person name="Ross M.T."/>
            <person name="Scott C.E."/>
            <person name="Sehra H.K."/>
            <person name="Skuce C.D."/>
            <person name="Smalley S."/>
            <person name="Smith M.L."/>
            <person name="Soderlund C."/>
            <person name="Spragon L."/>
            <person name="Steward C.A."/>
            <person name="Sulston J.E."/>
            <person name="Swann R.M."/>
            <person name="Vaudin M."/>
            <person name="Wall M."/>
            <person name="Wallis J.M."/>
            <person name="Whiteley M.N."/>
            <person name="Willey D.L."/>
            <person name="Williams L."/>
            <person name="Williams S.A."/>
            <person name="Williamson H."/>
            <person name="Wilmer T.E."/>
            <person name="Wilming L."/>
            <person name="Wright C.L."/>
            <person name="Hubbard T."/>
            <person name="Bentley D.R."/>
            <person name="Beck S."/>
            <person name="Rogers J."/>
            <person name="Shimizu N."/>
            <person name="Minoshima S."/>
            <person name="Kawasaki K."/>
            <person name="Sasaki T."/>
            <person name="Asakawa S."/>
            <person name="Kudoh J."/>
            <person name="Shintani A."/>
            <person name="Shibuya K."/>
            <person name="Yoshizaki Y."/>
            <person name="Aoki N."/>
            <person name="Mitsuyama S."/>
            <person name="Roe B.A."/>
            <person name="Chen F."/>
            <person name="Chu L."/>
            <person name="Crabtree J."/>
            <person name="Deschamps S."/>
            <person name="Do A."/>
            <person name="Do T."/>
            <person name="Dorman A."/>
            <person name="Fang F."/>
            <person name="Fu Y."/>
            <person name="Hu P."/>
            <person name="Hua A."/>
            <person name="Kenton S."/>
            <person name="Lai H."/>
            <person name="Lao H.I."/>
            <person name="Lewis J."/>
            <person name="Lewis S."/>
            <person name="Lin S.-P."/>
            <person name="Loh P."/>
            <person name="Malaj E."/>
            <person name="Nguyen T."/>
            <person name="Pan H."/>
            <person name="Phan S."/>
            <person name="Qi S."/>
            <person name="Qian Y."/>
            <person name="Ray L."/>
            <person name="Ren Q."/>
            <person name="Shaull S."/>
            <person name="Sloan D."/>
            <person name="Song L."/>
            <person name="Wang Q."/>
            <person name="Wang Y."/>
            <person name="Wang Z."/>
            <person name="White J."/>
            <person name="Willingham D."/>
            <person name="Wu H."/>
            <person name="Yao Z."/>
            <person name="Zhan M."/>
            <person name="Zhang G."/>
            <person name="Chissoe S."/>
            <person name="Murray J."/>
            <person name="Miller N."/>
            <person name="Minx P."/>
            <person name="Fulton R."/>
            <person name="Johnson D."/>
            <person name="Bemis G."/>
            <person name="Bentley D."/>
            <person name="Bradshaw H."/>
            <person name="Bourne S."/>
            <person name="Cordes M."/>
            <person name="Du Z."/>
            <person name="Fulton L."/>
            <person name="Goela D."/>
            <person name="Graves T."/>
            <person name="Hawkins J."/>
            <person name="Hinds K."/>
            <person name="Kemp K."/>
            <person name="Latreille P."/>
            <person name="Layman D."/>
            <person name="Ozersky P."/>
            <person name="Rohlfing T."/>
            <person name="Scheet P."/>
            <person name="Walker C."/>
            <person name="Wamsley A."/>
            <person name="Wohldmann P."/>
            <person name="Pepin K."/>
            <person name="Nelson J."/>
            <person name="Korf I."/>
            <person name="Bedell J.A."/>
            <person name="Hillier L.W."/>
            <person name="Mardis E."/>
            <person name="Waterston R."/>
            <person name="Wilson R."/>
            <person name="Emanuel B.S."/>
            <person name="Shaikh T."/>
            <person name="Kurahashi H."/>
            <person name="Saitta S."/>
            <person name="Budarf M.L."/>
            <person name="McDermid H.E."/>
            <person name="Johnson A."/>
            <person name="Wong A.C.C."/>
            <person name="Morrow B.E."/>
            <person name="Edelmann L."/>
            <person name="Kim U.J."/>
            <person name="Shizuya H."/>
            <person name="Simon M.I."/>
            <person name="Dumanski J.P."/>
            <person name="Peyrard M."/>
            <person name="Kedra D."/>
            <person name="Seroussi E."/>
            <person name="Fransson I."/>
            <person name="Tapia I."/>
            <person name="Bruder C.E."/>
            <person name="O'Brien K.P."/>
            <person name="Wilkinson P."/>
            <person name="Bodenteich A."/>
            <person name="Hartman K."/>
            <person name="Hu X."/>
            <person name="Khan A.S."/>
            <person name="Lane L."/>
            <person name="Tilahun Y."/>
            <person name="Wright H."/>
        </authorList>
    </citation>
    <scope>NUCLEOTIDE SEQUENCE [LARGE SCALE GENOMIC DNA]</scope>
</reference>
<reference key="6">
    <citation type="journal article" date="2004" name="Genome Res.">
        <title>The status, quality, and expansion of the NIH full-length cDNA project: the Mammalian Gene Collection (MGC).</title>
        <authorList>
            <consortium name="The MGC Project Team"/>
        </authorList>
    </citation>
    <scope>NUCLEOTIDE SEQUENCE [LARGE SCALE MRNA] (ISOFORMS 1 AND 2)</scope>
    <scope>VARIANT GLN-227</scope>
    <source>
        <tissue>Brain</tissue>
        <tissue>Eye</tissue>
    </source>
</reference>
<reference key="7">
    <citation type="journal article" date="1986" name="J. Biol. Chem.">
        <title>Purification and molecular characterization of human transcobalamin II.</title>
        <authorList>
            <person name="Quadros E.V."/>
            <person name="Rothenberg S.P."/>
            <person name="Pan Y.C.E."/>
            <person name="Stein S."/>
        </authorList>
    </citation>
    <scope>PROTEIN SEQUENCE OF 19-37</scope>
    <scope>SUBCELLULAR LOCATION</scope>
</reference>
<reference key="8">
    <citation type="journal article" date="1993" name="Blood">
        <title>Functional human transcobalamin II isoproteins are secreted by insect cells using the baculovirus expression system.</title>
        <authorList>
            <person name="Quadros E.V."/>
            <person name="Sai P."/>
            <person name="Rothenberg S.P."/>
        </authorList>
    </citation>
    <scope>PARTIAL PROTEIN SEQUENCE</scope>
    <scope>FUNCTION</scope>
    <scope>SUBCELLULAR LOCATION</scope>
</reference>
<reference evidence="15" key="9">
    <citation type="journal article" date="2006" name="Proc. Natl. Acad. Sci. U.S.A.">
        <title>Structural basis for mammalian vitamin B12 transport by transcobalamin.</title>
        <authorList>
            <person name="Wuerges J."/>
            <person name="Garau G."/>
            <person name="Geremia S."/>
            <person name="Fedosov S.N."/>
            <person name="Petersen T.E."/>
            <person name="Randaccio L."/>
        </authorList>
    </citation>
    <scope>X-RAY CRYSTALLOGRAPHY (3.2 ANGSTROMS) OF 19-427 IN COMPLEX WITH COBALAMIN</scope>
    <scope>DISULFIDE BONDS</scope>
</reference>
<reference evidence="16 17" key="10">
    <citation type="journal article" date="2016" name="Nat. Commun.">
        <title>Structural basis of transcobalamin recognition by human CD320 receptor.</title>
        <authorList>
            <person name="Alam A."/>
            <person name="Woo J.S."/>
            <person name="Schmitz J."/>
            <person name="Prinz B."/>
            <person name="Root K."/>
            <person name="Chen F."/>
            <person name="Bloch J.S."/>
            <person name="Zenobi R."/>
            <person name="Locher K.P."/>
        </authorList>
    </citation>
    <scope>X-RAY CRYSTALLOGRAPHY (2.10 ANGSTROMS) OF 19-427 IN COMPLEX WITH COBALAMIN AND CD320</scope>
    <scope>INTERACTION WITH CD320</scope>
    <scope>DISULFIDE BONDS</scope>
</reference>
<reference key="11">
    <citation type="journal article" date="2001" name="Blood">
        <title>Transcobalamin codon 259 polymorphism in HT-29 and Caco-2 cells and in Caucasians: relation to transcobalamin and homocysteine concentration in blood.</title>
        <authorList>
            <person name="Namour F."/>
            <person name="Olivier J."/>
            <person name="Abdelmouttaleb I."/>
            <person name="Adjalla C."/>
            <person name="Debard R."/>
            <person name="Salvat C."/>
            <person name="Gueant J."/>
        </authorList>
    </citation>
    <scope>VARIANT PRO-259</scope>
</reference>
<reference key="12">
    <citation type="journal article" date="2003" name="Br. J. Haematol.">
        <title>Transcobalamin deficiency due to activation of an intra exonic cryptic splice site.</title>
        <authorList>
            <person name="Namour F."/>
            <person name="Helfer A.C."/>
            <person name="Quadros E.V."/>
            <person name="Alberto J.M."/>
            <person name="Bibi H.M."/>
            <person name="Orning L."/>
            <person name="Rosenblatt D.S."/>
            <person name="Jean-Louis G."/>
        </authorList>
    </citation>
    <scope>INVOLVEMENT IN TCN2D</scope>
</reference>
<reference key="13">
    <citation type="journal article" date="2009" name="J. Hum. Genet.">
        <title>TC II deficiency: avoidance of false-negative molecular genetics by RNA-based investigations.</title>
        <authorList>
            <person name="Haeberle J."/>
            <person name="Pauli S."/>
            <person name="Berning C."/>
            <person name="Koch H.G."/>
            <person name="Linnebank M."/>
        </authorList>
    </citation>
    <scope>INVOLVEMENT IN TCN2D</scope>
</reference>
<reference key="14">
    <citation type="journal article" date="2020" name="BMC Pediatr.">
        <title>Identification of transcobalamin deficiency with two novel mutations in the TCN2 gene in a Chinese girl with abnormal immunity: a case report.</title>
        <authorList>
            <person name="Zhan S."/>
            <person name="Cheng F."/>
            <person name="He H."/>
            <person name="Hu S."/>
            <person name="Feng X."/>
        </authorList>
    </citation>
    <scope>VARIANT TCN2D 345-GLN--TRP-427 DEL</scope>
    <scope>INVOLVEMENT IN TCN2D</scope>
</reference>
<reference key="15">
    <citation type="journal article" date="2020" name="J. Pediatr. Endocrinol. Metab.">
        <title>Transcobalamin II deficiency in twins with a novel variant in the TCN2 gene: case report and review of literature.</title>
        <authorList>
            <person name="Kose E."/>
            <person name="Besci O."/>
            <person name="Gudeloglu E."/>
            <person name="Suncak S."/>
            <person name="Oymak Y."/>
            <person name="Ozen S."/>
            <person name="Isguder R."/>
        </authorList>
    </citation>
    <scope>VARIANT TCN2D 81-GLN--TRP-427 DEL</scope>
    <scope>INVOLVEMENT IN TCN2D</scope>
</reference>
<sequence length="427" mass="47535">MRHLGAFLFLLGVLGALTEMCEIPEMDSHLVEKLGQHLLPWMDRLSLEHLNPSIYVGLRLSSLQAGTKEDLYLHSLKLGYQQCLLGSAFSEDDGDCQGKPSMGQLALYLLALRANCEFVRGHKGDRLVSQLKWFLEDEKRAIGHDHKGHPHTSYYQYGLGILALCLHQKRVHDSVVDKLLYAVEPFHQGHHSVDTAAMAGLAFTCLKRSNFNPGRRQRITMAIRTVREEILKAQTPEGHFGNVYSTPLALQFLMTSPMRGAELGTACLKARVALLASLQDGAFQNALMISQLLPVLNHKTYIDLIFPDCLAPRVMLEPAAETIPQTQEIISVTLQVLSLLPPYRQSISVLAGSTVEDVLKKAHELGGFTYETQASLSGPYLTSVMGKAAGEREFWQLLRDPNTPLLQGIADYRPKDGETIELRLVSW</sequence>
<organism>
    <name type="scientific">Homo sapiens</name>
    <name type="common">Human</name>
    <dbReference type="NCBI Taxonomy" id="9606"/>
    <lineage>
        <taxon>Eukaryota</taxon>
        <taxon>Metazoa</taxon>
        <taxon>Chordata</taxon>
        <taxon>Craniata</taxon>
        <taxon>Vertebrata</taxon>
        <taxon>Euteleostomi</taxon>
        <taxon>Mammalia</taxon>
        <taxon>Eutheria</taxon>
        <taxon>Euarchontoglires</taxon>
        <taxon>Primates</taxon>
        <taxon>Haplorrhini</taxon>
        <taxon>Catarrhini</taxon>
        <taxon>Hominidae</taxon>
        <taxon>Homo</taxon>
    </lineage>
</organism>
<gene>
    <name type="primary">TCN2</name>
    <name type="synonym">TC2</name>
</gene>
<accession>P20062</accession>
<accession>Q96FD4</accession>
<accession>Q9BVI8</accession>
<accession>Q9UCI5</accession>
<accession>Q9UCI6</accession>
<accession>Q9UDM0</accession>
<comment type="function">
    <text evidence="12">Primary vitamin B12-binding and transport protein. Delivers cobalamin to cells.</text>
</comment>
<comment type="subunit">
    <text evidence="8">Interacts with CD320 (via LDL-receptor class A domains).</text>
</comment>
<comment type="interaction">
    <interactant intactId="EBI-2853005">
        <id>P20062</id>
    </interactant>
    <interactant intactId="EBI-1054562">
        <id>Q9NPF0</id>
        <label>CD320</label>
    </interactant>
    <organismsDiffer>false</organismsDiffer>
    <experiments>11</experiments>
</comment>
<comment type="subcellular location">
    <subcellularLocation>
        <location evidence="11 12">Secreted</location>
    </subcellularLocation>
</comment>
<comment type="alternative products">
    <event type="alternative splicing"/>
    <isoform>
        <id>P20062-1</id>
        <name>1</name>
        <sequence type="displayed"/>
    </isoform>
    <isoform>
        <id>P20062-2</id>
        <name>2</name>
        <sequence type="described" ref="VSP_043711"/>
    </isoform>
</comment>
<comment type="disease" evidence="2 7 9 10">
    <disease id="DI-02378">
        <name>Transcobalamin II deficiency</name>
        <acronym>TCN2D</acronym>
        <description>An autosomal recessive disorder manifesting in early infancy and characterized by failure to thrive, megaloblastic anemia, pancytopenia, and agammaglobulinemia. Additional features include methylmalonic aciduria, recurrent infections, vomiting and diarrhea. TCN2D may be accompanied by neurological complications, including psychomotor and mental developmental delay, if untreated.</description>
        <dbReference type="MIM" id="275350"/>
    </disease>
    <text>The disease is caused by variants affecting the gene represented in this entry.</text>
</comment>
<comment type="similarity">
    <text evidence="14">Belongs to the eukaryotic cobalamin transport proteins family.</text>
</comment>
<comment type="online information" name="TCN2base">
    <link uri="https://databases.lovd.nl/shared/genes/TCN2"/>
    <text>TCN2 mutation db</text>
</comment>
<proteinExistence type="evidence at protein level"/>
<keyword id="KW-0002">3D-structure</keyword>
<keyword id="KW-0025">Alternative splicing</keyword>
<keyword id="KW-0170">Cobalt</keyword>
<keyword id="KW-0171">Cobalt transport</keyword>
<keyword id="KW-0903">Direct protein sequencing</keyword>
<keyword id="KW-0225">Disease variant</keyword>
<keyword id="KW-1015">Disulfide bond</keyword>
<keyword id="KW-0406">Ion transport</keyword>
<keyword id="KW-0479">Metal-binding</keyword>
<keyword id="KW-1267">Proteomics identification</keyword>
<keyword id="KW-1185">Reference proteome</keyword>
<keyword id="KW-0964">Secreted</keyword>
<keyword id="KW-0732">Signal</keyword>
<keyword id="KW-0813">Transport</keyword>
<feature type="signal peptide" evidence="11">
    <location>
        <begin position="1"/>
        <end position="18"/>
    </location>
</feature>
<feature type="chain" id="PRO_0000005564" description="Transcobalamin-2">
    <location>
        <begin position="19"/>
        <end position="427"/>
    </location>
</feature>
<feature type="binding site" evidence="5 8 15">
    <location>
        <position position="104"/>
    </location>
    <ligand>
        <name>cob(II)alamin</name>
        <dbReference type="ChEBI" id="CHEBI:16304"/>
    </ligand>
</feature>
<feature type="binding site" evidence="5 15">
    <location>
        <begin position="152"/>
        <end position="156"/>
    </location>
    <ligand>
        <name>cob(II)alamin</name>
        <dbReference type="ChEBI" id="CHEBI:16304"/>
    </ligand>
</feature>
<feature type="binding site" evidence="5 15">
    <location>
        <begin position="190"/>
        <end position="194"/>
    </location>
    <ligand>
        <name>cob(II)alamin</name>
        <dbReference type="ChEBI" id="CHEBI:16304"/>
    </ligand>
</feature>
<feature type="binding site" description="axial binding residue">
    <location>
        <position position="190"/>
    </location>
    <ligand>
        <name>cob(II)alamin</name>
        <dbReference type="ChEBI" id="CHEBI:16304"/>
    </ligand>
    <ligandPart>
        <name>Co</name>
        <dbReference type="ChEBI" id="CHEBI:27638"/>
    </ligandPart>
</feature>
<feature type="binding site" evidence="5 15">
    <location>
        <position position="242"/>
    </location>
    <ligand>
        <name>cob(II)alamin</name>
        <dbReference type="ChEBI" id="CHEBI:16304"/>
    </ligand>
</feature>
<feature type="binding site" evidence="5 8 15">
    <location>
        <position position="245"/>
    </location>
    <ligand>
        <name>cob(II)alamin</name>
        <dbReference type="ChEBI" id="CHEBI:16304"/>
    </ligand>
</feature>
<feature type="binding site" evidence="5">
    <location>
        <position position="291"/>
    </location>
    <ligand>
        <name>cob(II)alamin</name>
        <dbReference type="ChEBI" id="CHEBI:16304"/>
    </ligand>
</feature>
<feature type="binding site" evidence="5 15">
    <location>
        <begin position="395"/>
        <end position="397"/>
    </location>
    <ligand>
        <name>cob(II)alamin</name>
        <dbReference type="ChEBI" id="CHEBI:16304"/>
    </ligand>
</feature>
<feature type="disulfide bond" evidence="5 8 15 16 17">
    <location>
        <begin position="21"/>
        <end position="267"/>
    </location>
</feature>
<feature type="disulfide bond" evidence="8 16 17">
    <location>
        <begin position="83"/>
        <end position="96"/>
    </location>
</feature>
<feature type="disulfide bond" evidence="5 8 15 16 17">
    <location>
        <begin position="116"/>
        <end position="309"/>
    </location>
</feature>
<feature type="disulfide bond" evidence="5 8 15 16 17">
    <location>
        <begin position="165"/>
        <end position="205"/>
    </location>
</feature>
<feature type="splice variant" id="VSP_043711" description="In isoform 2." evidence="13">
    <original>CEFVRGHKGDRLVSQLKWFLEDEKRAIG</original>
    <variation>W</variation>
    <location>
        <begin position="116"/>
        <end position="143"/>
    </location>
</feature>
<feature type="sequence variant" id="VAR_054539" description="In dbSNP:rs9606756.">
    <original>I</original>
    <variation>V</variation>
    <location>
        <position position="23"/>
    </location>
</feature>
<feature type="sequence variant" id="VAR_089509" description="In TCN2D; likely pathogenic." evidence="9">
    <location>
        <begin position="81"/>
        <end position="427"/>
    </location>
</feature>
<feature type="sequence variant" id="VAR_054540" description="In dbSNP:rs35915865.">
    <original>F</original>
    <variation>L</variation>
    <location>
        <position position="89"/>
    </location>
</feature>
<feature type="sequence variant" id="VAR_001638" evidence="6">
    <original>M</original>
    <variation>T</variation>
    <location>
        <position position="198"/>
    </location>
</feature>
<feature type="sequence variant" id="VAR_054541" description="In dbSNP:rs35838082.">
    <original>R</original>
    <variation>W</variation>
    <location>
        <position position="215"/>
    </location>
</feature>
<feature type="sequence variant" id="VAR_001639" evidence="6">
    <original>I</original>
    <variation>L</variation>
    <location>
        <position position="219"/>
    </location>
</feature>
<feature type="sequence variant" id="VAR_054542" description="In dbSNP:rs17849434." evidence="4">
    <original>R</original>
    <variation>Q</variation>
    <location>
        <position position="227"/>
    </location>
</feature>
<feature type="sequence variant" id="VAR_001640" description="In dbSNP:rs1801198." evidence="1 3 6">
    <original>R</original>
    <variation>P</variation>
    <location>
        <position position="259"/>
    </location>
</feature>
<feature type="sequence variant" id="VAR_089510" description="In TCN2D; likely pathogenic." evidence="10">
    <location>
        <begin position="345"/>
        <end position="427"/>
    </location>
</feature>
<feature type="sequence variant" id="VAR_054543" description="In dbSNP:rs9621049.">
    <original>S</original>
    <variation>F</variation>
    <location>
        <position position="348"/>
    </location>
</feature>
<feature type="sequence variant" id="VAR_001641" description="In dbSNP:rs1131603." evidence="6">
    <original>L</original>
    <variation>S</variation>
    <location>
        <position position="376"/>
    </location>
</feature>
<feature type="sequence variant" id="VAR_054544" description="In dbSNP:rs4820889.">
    <original>R</original>
    <variation>Q</variation>
    <location>
        <position position="399"/>
    </location>
</feature>
<feature type="helix" evidence="21">
    <location>
        <begin position="28"/>
        <end position="38"/>
    </location>
</feature>
<feature type="helix" evidence="21">
    <location>
        <begin position="39"/>
        <end position="43"/>
    </location>
</feature>
<feature type="turn" evidence="21">
    <location>
        <begin position="47"/>
        <end position="49"/>
    </location>
</feature>
<feature type="helix" evidence="21">
    <location>
        <begin position="52"/>
        <end position="59"/>
    </location>
</feature>
<feature type="strand" evidence="21">
    <location>
        <begin position="61"/>
        <end position="64"/>
    </location>
</feature>
<feature type="helix" evidence="21">
    <location>
        <begin position="67"/>
        <end position="84"/>
    </location>
</feature>
<feature type="turn" evidence="21">
    <location>
        <begin position="91"/>
        <end position="93"/>
    </location>
</feature>
<feature type="helix" evidence="21">
    <location>
        <begin position="102"/>
        <end position="114"/>
    </location>
</feature>
<feature type="helix" evidence="21">
    <location>
        <begin position="121"/>
        <end position="142"/>
    </location>
</feature>
<feature type="strand" evidence="18">
    <location>
        <begin position="144"/>
        <end position="146"/>
    </location>
</feature>
<feature type="helix" evidence="21">
    <location>
        <begin position="154"/>
        <end position="166"/>
    </location>
</feature>
<feature type="helix" evidence="21">
    <location>
        <begin position="173"/>
        <end position="183"/>
    </location>
</feature>
<feature type="strand" evidence="19">
    <location>
        <begin position="184"/>
        <end position="186"/>
    </location>
</feature>
<feature type="helix" evidence="21">
    <location>
        <begin position="193"/>
        <end position="209"/>
    </location>
</feature>
<feature type="helix" evidence="21">
    <location>
        <begin position="213"/>
        <end position="215"/>
    </location>
</feature>
<feature type="helix" evidence="21">
    <location>
        <begin position="216"/>
        <end position="232"/>
    </location>
</feature>
<feature type="strand" evidence="21">
    <location>
        <begin position="240"/>
        <end position="242"/>
    </location>
</feature>
<feature type="turn" evidence="21">
    <location>
        <begin position="243"/>
        <end position="245"/>
    </location>
</feature>
<feature type="helix" evidence="21">
    <location>
        <begin position="246"/>
        <end position="253"/>
    </location>
</feature>
<feature type="helix" evidence="21">
    <location>
        <begin position="263"/>
        <end position="279"/>
    </location>
</feature>
<feature type="helix" evidence="21">
    <location>
        <begin position="286"/>
        <end position="292"/>
    </location>
</feature>
<feature type="helix" evidence="21">
    <location>
        <begin position="295"/>
        <end position="297"/>
    </location>
</feature>
<feature type="helix" evidence="21">
    <location>
        <begin position="301"/>
        <end position="304"/>
    </location>
</feature>
<feature type="strand" evidence="20">
    <location>
        <begin position="328"/>
        <end position="336"/>
    </location>
</feature>
<feature type="strand" evidence="20">
    <location>
        <begin position="338"/>
        <end position="341"/>
    </location>
</feature>
<feature type="strand" evidence="20">
    <location>
        <begin position="343"/>
        <end position="350"/>
    </location>
</feature>
<feature type="helix" evidence="20">
    <location>
        <begin position="355"/>
        <end position="365"/>
    </location>
</feature>
<feature type="strand" evidence="20">
    <location>
        <begin position="370"/>
        <end position="373"/>
    </location>
</feature>
<feature type="strand" evidence="20">
    <location>
        <begin position="380"/>
        <end position="384"/>
    </location>
</feature>
<feature type="strand" evidence="20">
    <location>
        <begin position="393"/>
        <end position="399"/>
    </location>
</feature>
<feature type="turn" evidence="20">
    <location>
        <begin position="400"/>
        <end position="402"/>
    </location>
</feature>
<feature type="turn" evidence="20">
    <location>
        <begin position="409"/>
        <end position="411"/>
    </location>
</feature>
<feature type="strand" evidence="20">
    <location>
        <begin position="419"/>
        <end position="426"/>
    </location>
</feature>